<sequence>MVKRQRIESSNVPLSAFAVRQLTLSKAARKKDNSSGKKRSVSEEESQDKYEDEMKTEGEFPSYKHTLVQVVVPGVDHRTKLHSESSKNDSEITPDINRSKVNPQEYSEFSVASPQTISPSLPLNLDDETVSENVPHSPQSSNDAIPVIKITEENSFRVKDTLYVGLHKDQKLAMVGTFIFRSVRGKFQLFGATYSSACMSWFPLNAPLAFATPVFSAIDNALPAMQISEYEEDSLNLRSFAVPSYSPKEHEYELEPKDILPNFETVIAFRENENGLSKIARVLPFAKRLFSFKNLLQDASSISNNFEITPESWCSFSNQLLFSTSKSDYVVPRLMVCGPKGSGKSSFSRYITNRLLQQYRHIAYLDLDPGQPEVVPSGHISLYYINSPLQGPVFARMLFPTYMLRLHLGDISPQKDPDHYIACVTRLFAEYKDYIFNQEISQKEIIPLIINCPGWIRGGGAELLSSIVDICQPTEVVYMSREDMKSSHREKKSIYQHKEYMPDFLSSRDEFQLTLLESTWQYLPDPNVNKVTSADNRMLGLLSYLYFNCNLQRWDFTTSLTACQPIATAFKGSSKGIDAVNIIGEPLNVNDVAKTINGTLMALYACDTASLDNSNTQRIVSSPEGIPLIINDGLPLDPNTSHCLGLIVLRTIDLKRNEFHFVGPLNLELIKDAYAKSLKIVLERGRLELPVYAMLDHRLAQYSELPYLDRNHDRVAVGAHRRRVRRNIIRRSTFVG</sequence>
<name>GRC3_SCHPO</name>
<comment type="function">
    <text evidence="4">Polynucleotide 5'-kinase required for both rRNA processing and heterochromatic gene silencing.</text>
</comment>
<comment type="subunit">
    <text evidence="4">Interacts with crb3, rix1 and Las1.</text>
</comment>
<comment type="subcellular location">
    <subcellularLocation>
        <location evidence="4">Nucleus</location>
        <location evidence="4">Nucleolus</location>
    </subcellularLocation>
    <subcellularLocation>
        <location evidence="3 4">Nucleus</location>
    </subcellularLocation>
    <subcellularLocation>
        <location evidence="3">Chromosome</location>
    </subcellularLocation>
    <text evidence="3 4">Nuclear dots.</text>
</comment>
<comment type="similarity">
    <text evidence="5">Belongs to the Clp1 family. NOL9/GRC3 subfamily.</text>
</comment>
<accession>Q9UU96</accession>
<accession>Q9UTY4</accession>
<proteinExistence type="evidence at protein level"/>
<reference key="1">
    <citation type="journal article" date="2002" name="Nature">
        <title>The genome sequence of Schizosaccharomyces pombe.</title>
        <authorList>
            <person name="Wood V."/>
            <person name="Gwilliam R."/>
            <person name="Rajandream M.A."/>
            <person name="Lyne M.H."/>
            <person name="Lyne R."/>
            <person name="Stewart A."/>
            <person name="Sgouros J.G."/>
            <person name="Peat N."/>
            <person name="Hayles J."/>
            <person name="Baker S.G."/>
            <person name="Basham D."/>
            <person name="Bowman S."/>
            <person name="Brooks K."/>
            <person name="Brown D."/>
            <person name="Brown S."/>
            <person name="Chillingworth T."/>
            <person name="Churcher C.M."/>
            <person name="Collins M."/>
            <person name="Connor R."/>
            <person name="Cronin A."/>
            <person name="Davis P."/>
            <person name="Feltwell T."/>
            <person name="Fraser A."/>
            <person name="Gentles S."/>
            <person name="Goble A."/>
            <person name="Hamlin N."/>
            <person name="Harris D.E."/>
            <person name="Hidalgo J."/>
            <person name="Hodgson G."/>
            <person name="Holroyd S."/>
            <person name="Hornsby T."/>
            <person name="Howarth S."/>
            <person name="Huckle E.J."/>
            <person name="Hunt S."/>
            <person name="Jagels K."/>
            <person name="James K.D."/>
            <person name="Jones L."/>
            <person name="Jones M."/>
            <person name="Leather S."/>
            <person name="McDonald S."/>
            <person name="McLean J."/>
            <person name="Mooney P."/>
            <person name="Moule S."/>
            <person name="Mungall K.L."/>
            <person name="Murphy L.D."/>
            <person name="Niblett D."/>
            <person name="Odell C."/>
            <person name="Oliver K."/>
            <person name="O'Neil S."/>
            <person name="Pearson D."/>
            <person name="Quail M.A."/>
            <person name="Rabbinowitsch E."/>
            <person name="Rutherford K.M."/>
            <person name="Rutter S."/>
            <person name="Saunders D."/>
            <person name="Seeger K."/>
            <person name="Sharp S."/>
            <person name="Skelton J."/>
            <person name="Simmonds M.N."/>
            <person name="Squares R."/>
            <person name="Squares S."/>
            <person name="Stevens K."/>
            <person name="Taylor K."/>
            <person name="Taylor R.G."/>
            <person name="Tivey A."/>
            <person name="Walsh S.V."/>
            <person name="Warren T."/>
            <person name="Whitehead S."/>
            <person name="Woodward J.R."/>
            <person name="Volckaert G."/>
            <person name="Aert R."/>
            <person name="Robben J."/>
            <person name="Grymonprez B."/>
            <person name="Weltjens I."/>
            <person name="Vanstreels E."/>
            <person name="Rieger M."/>
            <person name="Schaefer M."/>
            <person name="Mueller-Auer S."/>
            <person name="Gabel C."/>
            <person name="Fuchs M."/>
            <person name="Duesterhoeft A."/>
            <person name="Fritzc C."/>
            <person name="Holzer E."/>
            <person name="Moestl D."/>
            <person name="Hilbert H."/>
            <person name="Borzym K."/>
            <person name="Langer I."/>
            <person name="Beck A."/>
            <person name="Lehrach H."/>
            <person name="Reinhardt R."/>
            <person name="Pohl T.M."/>
            <person name="Eger P."/>
            <person name="Zimmermann W."/>
            <person name="Wedler H."/>
            <person name="Wambutt R."/>
            <person name="Purnelle B."/>
            <person name="Goffeau A."/>
            <person name="Cadieu E."/>
            <person name="Dreano S."/>
            <person name="Gloux S."/>
            <person name="Lelaure V."/>
            <person name="Mottier S."/>
            <person name="Galibert F."/>
            <person name="Aves S.J."/>
            <person name="Xiang Z."/>
            <person name="Hunt C."/>
            <person name="Moore K."/>
            <person name="Hurst S.M."/>
            <person name="Lucas M."/>
            <person name="Rochet M."/>
            <person name="Gaillardin C."/>
            <person name="Tallada V.A."/>
            <person name="Garzon A."/>
            <person name="Thode G."/>
            <person name="Daga R.R."/>
            <person name="Cruzado L."/>
            <person name="Jimenez J."/>
            <person name="Sanchez M."/>
            <person name="del Rey F."/>
            <person name="Benito J."/>
            <person name="Dominguez A."/>
            <person name="Revuelta J.L."/>
            <person name="Moreno S."/>
            <person name="Armstrong J."/>
            <person name="Forsburg S.L."/>
            <person name="Cerutti L."/>
            <person name="Lowe T."/>
            <person name="McCombie W.R."/>
            <person name="Paulsen I."/>
            <person name="Potashkin J."/>
            <person name="Shpakovski G.V."/>
            <person name="Ussery D."/>
            <person name="Barrell B.G."/>
            <person name="Nurse P."/>
        </authorList>
    </citation>
    <scope>NUCLEOTIDE SEQUENCE [LARGE SCALE GENOMIC DNA]</scope>
    <source>
        <strain>972 / ATCC 24843</strain>
    </source>
</reference>
<reference key="2">
    <citation type="journal article" date="2000" name="Genes Cells">
        <title>Large-scale screening of intracellular protein localization in living fission yeast cells by the use of a GFP-fusion genomic DNA library.</title>
        <authorList>
            <person name="Ding D.-Q."/>
            <person name="Tomita Y."/>
            <person name="Yamamoto A."/>
            <person name="Chikashige Y."/>
            <person name="Haraguchi T."/>
            <person name="Hiraoka Y."/>
        </authorList>
    </citation>
    <scope>NUCLEOTIDE SEQUENCE [LARGE SCALE GENOMIC DNA] OF 335-525</scope>
    <scope>SUBCELLULAR LOCATION</scope>
    <source>
        <strain>ATCC 38364 / 968</strain>
    </source>
</reference>
<reference key="3">
    <citation type="journal article" date="2011" name="J. Biol. Chem.">
        <title>Roles of fission yeast Grc3 protein in ribosomal RNA processing and heterochromatic gene silencing.</title>
        <authorList>
            <person name="Kitano E."/>
            <person name="Hayashi A."/>
            <person name="Kanai D."/>
            <person name="Shinmyozu K."/>
            <person name="Nakayama J."/>
        </authorList>
    </citation>
    <scope>INTERACTION WITH CRB3; RIX1 AND LAS1</scope>
    <scope>SUBCELLULAR LOCATION</scope>
    <scope>FUNCTION</scope>
</reference>
<gene>
    <name type="primary">grc3</name>
    <name type="ORF">SPCC830.03</name>
</gene>
<organism>
    <name type="scientific">Schizosaccharomyces pombe (strain 972 / ATCC 24843)</name>
    <name type="common">Fission yeast</name>
    <dbReference type="NCBI Taxonomy" id="284812"/>
    <lineage>
        <taxon>Eukaryota</taxon>
        <taxon>Fungi</taxon>
        <taxon>Dikarya</taxon>
        <taxon>Ascomycota</taxon>
        <taxon>Taphrinomycotina</taxon>
        <taxon>Schizosaccharomycetes</taxon>
        <taxon>Schizosaccharomycetales</taxon>
        <taxon>Schizosaccharomycetaceae</taxon>
        <taxon>Schizosaccharomyces</taxon>
    </lineage>
</organism>
<evidence type="ECO:0000255" key="1"/>
<evidence type="ECO:0000256" key="2">
    <source>
        <dbReference type="SAM" id="MobiDB-lite"/>
    </source>
</evidence>
<evidence type="ECO:0000269" key="3">
    <source>
    </source>
</evidence>
<evidence type="ECO:0000269" key="4">
    <source>
    </source>
</evidence>
<evidence type="ECO:0000305" key="5"/>
<feature type="chain" id="PRO_0000087595" description="Polynucleotide 5'-hydroxyl-kinase grc3">
    <location>
        <begin position="1"/>
        <end position="736"/>
    </location>
</feature>
<feature type="region of interest" description="Disordered" evidence="2">
    <location>
        <begin position="26"/>
        <end position="58"/>
    </location>
</feature>
<feature type="region of interest" description="Disordered" evidence="2">
    <location>
        <begin position="81"/>
        <end position="100"/>
    </location>
</feature>
<feature type="compositionally biased region" description="Basic and acidic residues" evidence="2">
    <location>
        <begin position="47"/>
        <end position="58"/>
    </location>
</feature>
<feature type="compositionally biased region" description="Basic and acidic residues" evidence="2">
    <location>
        <begin position="81"/>
        <end position="90"/>
    </location>
</feature>
<feature type="binding site" evidence="1">
    <location>
        <begin position="338"/>
        <end position="345"/>
    </location>
    <ligand>
        <name>ATP</name>
        <dbReference type="ChEBI" id="CHEBI:30616"/>
    </ligand>
</feature>
<dbReference type="EC" id="2.7.1.-"/>
<dbReference type="EMBL" id="CU329672">
    <property type="protein sequence ID" value="CAB52876.1"/>
    <property type="molecule type" value="Genomic_DNA"/>
</dbReference>
<dbReference type="EMBL" id="AB027930">
    <property type="protein sequence ID" value="BAA87234.1"/>
    <property type="molecule type" value="Genomic_DNA"/>
</dbReference>
<dbReference type="PIR" id="T41629">
    <property type="entry name" value="T41629"/>
</dbReference>
<dbReference type="RefSeq" id="NP_588473.1">
    <property type="nucleotide sequence ID" value="NM_001023464.2"/>
</dbReference>
<dbReference type="SMR" id="Q9UU96"/>
<dbReference type="BioGRID" id="275895">
    <property type="interactions" value="7"/>
</dbReference>
<dbReference type="FunCoup" id="Q9UU96">
    <property type="interactions" value="376"/>
</dbReference>
<dbReference type="STRING" id="284812.Q9UU96"/>
<dbReference type="iPTMnet" id="Q9UU96"/>
<dbReference type="PaxDb" id="4896-SPCC830.03.1"/>
<dbReference type="EnsemblFungi" id="SPCC830.03.1">
    <property type="protein sequence ID" value="SPCC830.03.1:pep"/>
    <property type="gene ID" value="SPCC830.03"/>
</dbReference>
<dbReference type="GeneID" id="2539329"/>
<dbReference type="KEGG" id="spo:2539329"/>
<dbReference type="PomBase" id="SPCC830.03">
    <property type="gene designation" value="grc3"/>
</dbReference>
<dbReference type="VEuPathDB" id="FungiDB:SPCC830.03"/>
<dbReference type="eggNOG" id="KOG2750">
    <property type="taxonomic scope" value="Eukaryota"/>
</dbReference>
<dbReference type="HOGENOM" id="CLU_012180_0_0_1"/>
<dbReference type="InParanoid" id="Q9UU96"/>
<dbReference type="OMA" id="EHVWKVR"/>
<dbReference type="PhylomeDB" id="Q9UU96"/>
<dbReference type="Reactome" id="R-SPO-6791226">
    <property type="pathway name" value="Major pathway of rRNA processing in the nucleolus and cytosol"/>
</dbReference>
<dbReference type="PRO" id="PR:Q9UU96"/>
<dbReference type="Proteomes" id="UP000002485">
    <property type="component" value="Chromosome III"/>
</dbReference>
<dbReference type="GO" id="GO:0099115">
    <property type="term" value="C:chromosome, subtelomeric region"/>
    <property type="evidence" value="ECO:0000314"/>
    <property type="project" value="PomBase"/>
</dbReference>
<dbReference type="GO" id="GO:0090730">
    <property type="term" value="C:Las1 complex"/>
    <property type="evidence" value="ECO:0000266"/>
    <property type="project" value="PomBase"/>
</dbReference>
<dbReference type="GO" id="GO:0031934">
    <property type="term" value="C:mating-type region heterochromatin"/>
    <property type="evidence" value="ECO:0000314"/>
    <property type="project" value="PomBase"/>
</dbReference>
<dbReference type="GO" id="GO:0005730">
    <property type="term" value="C:nucleolus"/>
    <property type="evidence" value="ECO:0007669"/>
    <property type="project" value="UniProtKB-SubCell"/>
</dbReference>
<dbReference type="GO" id="GO:0005634">
    <property type="term" value="C:nucleus"/>
    <property type="evidence" value="ECO:0007005"/>
    <property type="project" value="PomBase"/>
</dbReference>
<dbReference type="GO" id="GO:0005721">
    <property type="term" value="C:pericentric heterochromatin"/>
    <property type="evidence" value="ECO:0000314"/>
    <property type="project" value="PomBase"/>
</dbReference>
<dbReference type="GO" id="GO:0097356">
    <property type="term" value="C:perinucleolar compartment"/>
    <property type="evidence" value="ECO:0000314"/>
    <property type="project" value="PomBase"/>
</dbReference>
<dbReference type="GO" id="GO:0120330">
    <property type="term" value="C:rixosome complex"/>
    <property type="evidence" value="ECO:0000304"/>
    <property type="project" value="PomBase"/>
</dbReference>
<dbReference type="GO" id="GO:0005524">
    <property type="term" value="F:ATP binding"/>
    <property type="evidence" value="ECO:0007669"/>
    <property type="project" value="UniProtKB-KW"/>
</dbReference>
<dbReference type="GO" id="GO:0051731">
    <property type="term" value="F:polynucleotide 5'-hydroxyl-kinase activity"/>
    <property type="evidence" value="ECO:0000250"/>
    <property type="project" value="UniProtKB"/>
</dbReference>
<dbReference type="GO" id="GO:0000448">
    <property type="term" value="P:cleavage in ITS2 between 5.8S rRNA and LSU-rRNA of tricistronic rRNA transcript (SSU-rRNA, 5.8S rRNA, LSU-rRNA)"/>
    <property type="evidence" value="ECO:0000318"/>
    <property type="project" value="GO_Central"/>
</dbReference>
<dbReference type="GO" id="GO:0006364">
    <property type="term" value="P:rRNA processing"/>
    <property type="evidence" value="ECO:0000315"/>
    <property type="project" value="PomBase"/>
</dbReference>
<dbReference type="FunFam" id="3.40.50.300:FF:005007">
    <property type="entry name" value="Polynucleotide 5'-hydroxyl-kinase grc3"/>
    <property type="match status" value="1"/>
</dbReference>
<dbReference type="Gene3D" id="3.40.50.300">
    <property type="entry name" value="P-loop containing nucleotide triphosphate hydrolases"/>
    <property type="match status" value="1"/>
</dbReference>
<dbReference type="InterPro" id="IPR045116">
    <property type="entry name" value="Clp1/Grc3"/>
</dbReference>
<dbReference type="InterPro" id="IPR032319">
    <property type="entry name" value="CLP1_P"/>
</dbReference>
<dbReference type="InterPro" id="IPR027417">
    <property type="entry name" value="P-loop_NTPase"/>
</dbReference>
<dbReference type="PANTHER" id="PTHR12755">
    <property type="entry name" value="CLEAVAGE/POLYADENYLATION FACTOR IA SUBUNIT CLP1P"/>
    <property type="match status" value="1"/>
</dbReference>
<dbReference type="PANTHER" id="PTHR12755:SF3">
    <property type="entry name" value="POLYNUCLEOTIDE 5'-HYDROXYL-KINASE NOL9"/>
    <property type="match status" value="1"/>
</dbReference>
<dbReference type="Pfam" id="PF16575">
    <property type="entry name" value="CLP1_P"/>
    <property type="match status" value="1"/>
</dbReference>
<dbReference type="SUPFAM" id="SSF52540">
    <property type="entry name" value="P-loop containing nucleoside triphosphate hydrolases"/>
    <property type="match status" value="1"/>
</dbReference>
<protein>
    <recommendedName>
        <fullName>Polynucleotide 5'-hydroxyl-kinase grc3</fullName>
        <ecNumber>2.7.1.-</ecNumber>
    </recommendedName>
</protein>
<keyword id="KW-0067">ATP-binding</keyword>
<keyword id="KW-0158">Chromosome</keyword>
<keyword id="KW-0418">Kinase</keyword>
<keyword id="KW-0547">Nucleotide-binding</keyword>
<keyword id="KW-0539">Nucleus</keyword>
<keyword id="KW-1185">Reference proteome</keyword>
<keyword id="KW-0698">rRNA processing</keyword>
<keyword id="KW-0804">Transcription</keyword>
<keyword id="KW-0805">Transcription regulation</keyword>
<keyword id="KW-0808">Transferase</keyword>